<sequence length="139" mass="15292">MKKGTVLNSDISSVISRLGHTDTLVVCDAGLPIPKSTTRIDMALTQGVPSFMQVLGVVTNEMQVEAAIIAEEIKHHNPQLHETLLTHLEQLQKHQGNTIEIRYTTHEQFKQQTAESQAVIRSGECSPYANIILCAGVTF</sequence>
<name>RBSD_ECO57</name>
<evidence type="ECO:0000250" key="1"/>
<evidence type="ECO:0000305" key="2"/>
<comment type="function">
    <text evidence="1">Catalyzes the interconversion of beta-pyran and beta-furan forms of D-ribose.</text>
</comment>
<comment type="catalytic activity">
    <reaction>
        <text>beta-D-ribopyranose = beta-D-ribofuranose</text>
        <dbReference type="Rhea" id="RHEA:25432"/>
        <dbReference type="ChEBI" id="CHEBI:27476"/>
        <dbReference type="ChEBI" id="CHEBI:47002"/>
        <dbReference type="EC" id="5.4.99.62"/>
    </reaction>
</comment>
<comment type="pathway">
    <text>Carbohydrate metabolism; D-ribose degradation; D-ribose 5-phosphate from beta-D-ribopyranose: step 1/2.</text>
</comment>
<comment type="subunit">
    <text evidence="1">Homodecamer.</text>
</comment>
<comment type="subcellular location">
    <subcellularLocation>
        <location evidence="2">Cytoplasm</location>
    </subcellularLocation>
</comment>
<comment type="similarity">
    <text evidence="2">Belongs to the RbsD / FucU family. RbsD subfamily.</text>
</comment>
<comment type="sequence caution" evidence="2">
    <conflict type="erroneous initiation">
        <sequence resource="EMBL-CDS" id="AAG58951"/>
    </conflict>
</comment>
<gene>
    <name type="primary">rbsD</name>
    <name type="ordered locus">Z5249</name>
    <name type="ordered locus">ECs4690</name>
</gene>
<proteinExistence type="inferred from homology"/>
<organism>
    <name type="scientific">Escherichia coli O157:H7</name>
    <dbReference type="NCBI Taxonomy" id="83334"/>
    <lineage>
        <taxon>Bacteria</taxon>
        <taxon>Pseudomonadati</taxon>
        <taxon>Pseudomonadota</taxon>
        <taxon>Gammaproteobacteria</taxon>
        <taxon>Enterobacterales</taxon>
        <taxon>Enterobacteriaceae</taxon>
        <taxon>Escherichia</taxon>
    </lineage>
</organism>
<accession>Q8XAW8</accession>
<accession>Q7A9G9</accession>
<reference key="1">
    <citation type="journal article" date="2001" name="Nature">
        <title>Genome sequence of enterohaemorrhagic Escherichia coli O157:H7.</title>
        <authorList>
            <person name="Perna N.T."/>
            <person name="Plunkett G. III"/>
            <person name="Burland V."/>
            <person name="Mau B."/>
            <person name="Glasner J.D."/>
            <person name="Rose D.J."/>
            <person name="Mayhew G.F."/>
            <person name="Evans P.S."/>
            <person name="Gregor J."/>
            <person name="Kirkpatrick H.A."/>
            <person name="Posfai G."/>
            <person name="Hackett J."/>
            <person name="Klink S."/>
            <person name="Boutin A."/>
            <person name="Shao Y."/>
            <person name="Miller L."/>
            <person name="Grotbeck E.J."/>
            <person name="Davis N.W."/>
            <person name="Lim A."/>
            <person name="Dimalanta E.T."/>
            <person name="Potamousis K."/>
            <person name="Apodaca J."/>
            <person name="Anantharaman T.S."/>
            <person name="Lin J."/>
            <person name="Yen G."/>
            <person name="Schwartz D.C."/>
            <person name="Welch R.A."/>
            <person name="Blattner F.R."/>
        </authorList>
    </citation>
    <scope>NUCLEOTIDE SEQUENCE [LARGE SCALE GENOMIC DNA]</scope>
    <source>
        <strain>O157:H7 / EDL933 / ATCC 700927 / EHEC</strain>
    </source>
</reference>
<reference key="2">
    <citation type="journal article" date="2001" name="DNA Res.">
        <title>Complete genome sequence of enterohemorrhagic Escherichia coli O157:H7 and genomic comparison with a laboratory strain K-12.</title>
        <authorList>
            <person name="Hayashi T."/>
            <person name="Makino K."/>
            <person name="Ohnishi M."/>
            <person name="Kurokawa K."/>
            <person name="Ishii K."/>
            <person name="Yokoyama K."/>
            <person name="Han C.-G."/>
            <person name="Ohtsubo E."/>
            <person name="Nakayama K."/>
            <person name="Murata T."/>
            <person name="Tanaka M."/>
            <person name="Tobe T."/>
            <person name="Iida T."/>
            <person name="Takami H."/>
            <person name="Honda T."/>
            <person name="Sasakawa C."/>
            <person name="Ogasawara N."/>
            <person name="Yasunaga T."/>
            <person name="Kuhara S."/>
            <person name="Shiba T."/>
            <person name="Hattori M."/>
            <person name="Shinagawa H."/>
        </authorList>
    </citation>
    <scope>NUCLEOTIDE SEQUENCE [LARGE SCALE GENOMIC DNA]</scope>
    <source>
        <strain>O157:H7 / Sakai / RIMD 0509952 / EHEC</strain>
    </source>
</reference>
<protein>
    <recommendedName>
        <fullName>D-ribose pyranase</fullName>
        <ecNumber>5.4.99.62</ecNumber>
    </recommendedName>
</protein>
<dbReference type="EC" id="5.4.99.62"/>
<dbReference type="EMBL" id="AE005174">
    <property type="protein sequence ID" value="AAG58951.1"/>
    <property type="status" value="ALT_INIT"/>
    <property type="molecule type" value="Genomic_DNA"/>
</dbReference>
<dbReference type="EMBL" id="BA000007">
    <property type="protein sequence ID" value="BAB38113.1"/>
    <property type="molecule type" value="Genomic_DNA"/>
</dbReference>
<dbReference type="PIR" id="B91215">
    <property type="entry name" value="B91215"/>
</dbReference>
<dbReference type="PIR" id="C86061">
    <property type="entry name" value="C86061"/>
</dbReference>
<dbReference type="RefSeq" id="NP_312717.1">
    <property type="nucleotide sequence ID" value="NC_002695.1"/>
</dbReference>
<dbReference type="RefSeq" id="WP_001301979.1">
    <property type="nucleotide sequence ID" value="NZ_VOAI01000011.1"/>
</dbReference>
<dbReference type="SMR" id="Q8XAW8"/>
<dbReference type="STRING" id="155864.Z5249"/>
<dbReference type="GeneID" id="75173982"/>
<dbReference type="GeneID" id="915320"/>
<dbReference type="KEGG" id="ece:Z5249"/>
<dbReference type="KEGG" id="ecs:ECs_4690"/>
<dbReference type="PATRIC" id="fig|386585.9.peg.4896"/>
<dbReference type="eggNOG" id="COG1869">
    <property type="taxonomic scope" value="Bacteria"/>
</dbReference>
<dbReference type="HOGENOM" id="CLU_135498_0_0_6"/>
<dbReference type="OMA" id="EQTPYAN"/>
<dbReference type="UniPathway" id="UPA00916">
    <property type="reaction ID" value="UER00888"/>
</dbReference>
<dbReference type="Proteomes" id="UP000000558">
    <property type="component" value="Chromosome"/>
</dbReference>
<dbReference type="Proteomes" id="UP000002519">
    <property type="component" value="Chromosome"/>
</dbReference>
<dbReference type="GO" id="GO:0005829">
    <property type="term" value="C:cytosol"/>
    <property type="evidence" value="ECO:0007669"/>
    <property type="project" value="TreeGrafter"/>
</dbReference>
<dbReference type="GO" id="GO:0062193">
    <property type="term" value="F:D-ribose pyranase activity"/>
    <property type="evidence" value="ECO:0007669"/>
    <property type="project" value="UniProtKB-EC"/>
</dbReference>
<dbReference type="GO" id="GO:0016872">
    <property type="term" value="F:intramolecular lyase activity"/>
    <property type="evidence" value="ECO:0007669"/>
    <property type="project" value="UniProtKB-UniRule"/>
</dbReference>
<dbReference type="GO" id="GO:0048029">
    <property type="term" value="F:monosaccharide binding"/>
    <property type="evidence" value="ECO:0007669"/>
    <property type="project" value="InterPro"/>
</dbReference>
<dbReference type="GO" id="GO:0019303">
    <property type="term" value="P:D-ribose catabolic process"/>
    <property type="evidence" value="ECO:0007669"/>
    <property type="project" value="UniProtKB-UniRule"/>
</dbReference>
<dbReference type="FunFam" id="3.40.1650.10:FF:000002">
    <property type="entry name" value="D-ribose pyranase"/>
    <property type="match status" value="1"/>
</dbReference>
<dbReference type="Gene3D" id="3.40.1650.10">
    <property type="entry name" value="RbsD-like domain"/>
    <property type="match status" value="1"/>
</dbReference>
<dbReference type="HAMAP" id="MF_01661">
    <property type="entry name" value="D_rib_pyranase"/>
    <property type="match status" value="1"/>
</dbReference>
<dbReference type="InterPro" id="IPR023064">
    <property type="entry name" value="D-ribose_pyranase"/>
</dbReference>
<dbReference type="InterPro" id="IPR023750">
    <property type="entry name" value="RbsD-like_sf"/>
</dbReference>
<dbReference type="InterPro" id="IPR007721">
    <property type="entry name" value="RbsD_FucU"/>
</dbReference>
<dbReference type="NCBIfam" id="NF008761">
    <property type="entry name" value="PRK11797.1"/>
    <property type="match status" value="1"/>
</dbReference>
<dbReference type="PANTHER" id="PTHR37831">
    <property type="entry name" value="D-RIBOSE PYRANASE"/>
    <property type="match status" value="1"/>
</dbReference>
<dbReference type="PANTHER" id="PTHR37831:SF1">
    <property type="entry name" value="D-RIBOSE PYRANASE"/>
    <property type="match status" value="1"/>
</dbReference>
<dbReference type="Pfam" id="PF05025">
    <property type="entry name" value="RbsD_FucU"/>
    <property type="match status" value="1"/>
</dbReference>
<dbReference type="SUPFAM" id="SSF102546">
    <property type="entry name" value="RbsD-like"/>
    <property type="match status" value="1"/>
</dbReference>
<feature type="chain" id="PRO_0000097191" description="D-ribose pyranase">
    <location>
        <begin position="1"/>
        <end position="139"/>
    </location>
</feature>
<feature type="active site" description="Proton donor" evidence="1">
    <location>
        <position position="20"/>
    </location>
</feature>
<feature type="binding site" evidence="1">
    <location>
        <position position="28"/>
    </location>
    <ligand>
        <name>substrate</name>
    </ligand>
</feature>
<feature type="binding site" evidence="1">
    <location>
        <position position="106"/>
    </location>
    <ligand>
        <name>substrate</name>
    </ligand>
</feature>
<feature type="binding site" evidence="1">
    <location>
        <begin position="128"/>
        <end position="130"/>
    </location>
    <ligand>
        <name>substrate</name>
    </ligand>
</feature>
<keyword id="KW-0119">Carbohydrate metabolism</keyword>
<keyword id="KW-0963">Cytoplasm</keyword>
<keyword id="KW-0413">Isomerase</keyword>
<keyword id="KW-1185">Reference proteome</keyword>